<feature type="chain" id="PRO_1000206422" description="Large ribosomal subunit protein eL30">
    <location>
        <begin position="1"/>
        <end position="100"/>
    </location>
</feature>
<comment type="similarity">
    <text evidence="1">Belongs to the eukaryotic ribosomal protein eL30 family.</text>
</comment>
<accession>C6A1G2</accession>
<proteinExistence type="inferred from homology"/>
<sequence length="100" mass="10730">MDLAFELRKAIETGKVVIGSNETMRLARTGEAKLIIMAKNAPKEVKDDINYYAGLSSIPVYEFEGTSVELGTLLGKPFVIALMAIVEPGESKILSLAGGK</sequence>
<organism>
    <name type="scientific">Thermococcus sibiricus (strain DSM 12597 / MM 739)</name>
    <dbReference type="NCBI Taxonomy" id="604354"/>
    <lineage>
        <taxon>Archaea</taxon>
        <taxon>Methanobacteriati</taxon>
        <taxon>Methanobacteriota</taxon>
        <taxon>Thermococci</taxon>
        <taxon>Thermococcales</taxon>
        <taxon>Thermococcaceae</taxon>
        <taxon>Thermococcus</taxon>
    </lineage>
</organism>
<dbReference type="EMBL" id="CP001463">
    <property type="protein sequence ID" value="ACS89457.1"/>
    <property type="molecule type" value="Genomic_DNA"/>
</dbReference>
<dbReference type="RefSeq" id="WP_015848677.1">
    <property type="nucleotide sequence ID" value="NC_012883.1"/>
</dbReference>
<dbReference type="SMR" id="C6A1G2"/>
<dbReference type="STRING" id="604354.TSIB_0391"/>
<dbReference type="GeneID" id="8095373"/>
<dbReference type="KEGG" id="tsi:TSIB_0391"/>
<dbReference type="eggNOG" id="arCOG01752">
    <property type="taxonomic scope" value="Archaea"/>
</dbReference>
<dbReference type="HOGENOM" id="CLU_130502_1_0_2"/>
<dbReference type="OrthoDB" id="10759at2157"/>
<dbReference type="Proteomes" id="UP000009079">
    <property type="component" value="Chromosome"/>
</dbReference>
<dbReference type="GO" id="GO:0022625">
    <property type="term" value="C:cytosolic large ribosomal subunit"/>
    <property type="evidence" value="ECO:0007669"/>
    <property type="project" value="InterPro"/>
</dbReference>
<dbReference type="GO" id="GO:0003723">
    <property type="term" value="F:RNA binding"/>
    <property type="evidence" value="ECO:0007669"/>
    <property type="project" value="InterPro"/>
</dbReference>
<dbReference type="GO" id="GO:0003735">
    <property type="term" value="F:structural constituent of ribosome"/>
    <property type="evidence" value="ECO:0007669"/>
    <property type="project" value="InterPro"/>
</dbReference>
<dbReference type="GO" id="GO:0006412">
    <property type="term" value="P:translation"/>
    <property type="evidence" value="ECO:0007669"/>
    <property type="project" value="UniProtKB-UniRule"/>
</dbReference>
<dbReference type="Gene3D" id="3.30.1330.30">
    <property type="match status" value="1"/>
</dbReference>
<dbReference type="HAMAP" id="MF_00481">
    <property type="entry name" value="Ribosomal_eL30"/>
    <property type="match status" value="1"/>
</dbReference>
<dbReference type="InterPro" id="IPR000231">
    <property type="entry name" value="Ribosomal_eL30"/>
</dbReference>
<dbReference type="InterPro" id="IPR039109">
    <property type="entry name" value="Ribosomal_eL30-like"/>
</dbReference>
<dbReference type="InterPro" id="IPR029064">
    <property type="entry name" value="Ribosomal_eL30-like_sf"/>
</dbReference>
<dbReference type="InterPro" id="IPR022991">
    <property type="entry name" value="Ribosomal_eL30_CS"/>
</dbReference>
<dbReference type="InterPro" id="IPR004038">
    <property type="entry name" value="Ribosomal_eL8/eL30/eS12/Gad45"/>
</dbReference>
<dbReference type="NCBIfam" id="NF002172">
    <property type="entry name" value="PRK01018.1"/>
    <property type="match status" value="1"/>
</dbReference>
<dbReference type="PANTHER" id="PTHR11449">
    <property type="entry name" value="RIBOSOMAL PROTEIN L30"/>
    <property type="match status" value="1"/>
</dbReference>
<dbReference type="Pfam" id="PF01248">
    <property type="entry name" value="Ribosomal_L7Ae"/>
    <property type="match status" value="1"/>
</dbReference>
<dbReference type="SUPFAM" id="SSF55315">
    <property type="entry name" value="L30e-like"/>
    <property type="match status" value="1"/>
</dbReference>
<dbReference type="PROSITE" id="PS00709">
    <property type="entry name" value="RIBOSOMAL_L30E_1"/>
    <property type="match status" value="1"/>
</dbReference>
<dbReference type="PROSITE" id="PS00993">
    <property type="entry name" value="RIBOSOMAL_L30E_2"/>
    <property type="match status" value="1"/>
</dbReference>
<protein>
    <recommendedName>
        <fullName evidence="1">Large ribosomal subunit protein eL30</fullName>
    </recommendedName>
    <alternativeName>
        <fullName evidence="2">50S ribosomal protein L30e</fullName>
    </alternativeName>
</protein>
<reference key="1">
    <citation type="journal article" date="2009" name="Appl. Environ. Microbiol.">
        <title>Metabolic versatility and indigenous origin of the archaeon Thermococcus sibiricus, isolated from a siberian oil reservoir, as revealed by genome analysis.</title>
        <authorList>
            <person name="Mardanov A.V."/>
            <person name="Ravin N.V."/>
            <person name="Svetlitchnyi V.A."/>
            <person name="Beletsky A.V."/>
            <person name="Miroshnichenko M.L."/>
            <person name="Bonch-Osmolovskaya E.A."/>
            <person name="Skryabin K.G."/>
        </authorList>
    </citation>
    <scope>NUCLEOTIDE SEQUENCE [LARGE SCALE GENOMIC DNA]</scope>
    <source>
        <strain>DSM 12597 / MM 739</strain>
    </source>
</reference>
<gene>
    <name evidence="1" type="primary">rpl30e</name>
    <name type="ordered locus">TSIB_0391</name>
</gene>
<keyword id="KW-1185">Reference proteome</keyword>
<keyword id="KW-0687">Ribonucleoprotein</keyword>
<keyword id="KW-0689">Ribosomal protein</keyword>
<name>RL30E_THESM</name>
<evidence type="ECO:0000255" key="1">
    <source>
        <dbReference type="HAMAP-Rule" id="MF_00481"/>
    </source>
</evidence>
<evidence type="ECO:0000305" key="2"/>